<sequence>MDLPGPIHEILVLFGGFVLLLGGLGVVLLTNPTFSAFSLGLVLVCISLFYILLNSYFVAVAQLLIYVGAINVLIIFAVMFVNGSEWSKDKNFWTIGDGFTSLVCITIPFSLMTTIPDTSWYGILWTTRSNQIVEQGLINNVQQIGIHLATDFYLPFELISIILLVSLIGAITMARQ</sequence>
<protein>
    <recommendedName>
        <fullName>NAD(P)H-quinone oxidoreductase subunit 6, chloroplastic</fullName>
        <ecNumber>7.1.1.-</ecNumber>
    </recommendedName>
    <alternativeName>
        <fullName>NAD(P)H dehydrogenase subunit 6</fullName>
    </alternativeName>
    <alternativeName>
        <fullName>NADH-plastoquinone oxidoreductase subunit 6</fullName>
    </alternativeName>
</protein>
<dbReference type="EC" id="7.1.1.-"/>
<dbReference type="EMBL" id="AY522331">
    <property type="protein sequence ID" value="AAS46223.1"/>
    <property type="molecule type" value="Genomic_DNA"/>
</dbReference>
<dbReference type="RefSeq" id="NP_039447.1">
    <property type="nucleotide sequence ID" value="NC_001320.1"/>
</dbReference>
<dbReference type="RefSeq" id="YP_009305365.1">
    <property type="nucleotide sequence ID" value="NC_031333.1"/>
</dbReference>
<dbReference type="SMR" id="P0C329"/>
<dbReference type="GeneID" id="29141441"/>
<dbReference type="GeneID" id="3131401"/>
<dbReference type="KEGG" id="osa:3131401"/>
<dbReference type="GO" id="GO:0009535">
    <property type="term" value="C:chloroplast thylakoid membrane"/>
    <property type="evidence" value="ECO:0007669"/>
    <property type="project" value="UniProtKB-SubCell"/>
</dbReference>
<dbReference type="GO" id="GO:0009536">
    <property type="term" value="C:plastid"/>
    <property type="evidence" value="ECO:0000305"/>
    <property type="project" value="Gramene"/>
</dbReference>
<dbReference type="GO" id="GO:0008137">
    <property type="term" value="F:NADH dehydrogenase (ubiquinone) activity"/>
    <property type="evidence" value="ECO:0007669"/>
    <property type="project" value="InterPro"/>
</dbReference>
<dbReference type="GO" id="GO:0048038">
    <property type="term" value="F:quinone binding"/>
    <property type="evidence" value="ECO:0007669"/>
    <property type="project" value="UniProtKB-KW"/>
</dbReference>
<dbReference type="FunFam" id="1.20.120.1200:FF:000002">
    <property type="entry name" value="NAD(P)H-quinone oxidoreductase subunit 6, chloroplastic"/>
    <property type="match status" value="1"/>
</dbReference>
<dbReference type="Gene3D" id="1.20.120.1200">
    <property type="entry name" value="NADH-ubiquinone/plastoquinone oxidoreductase chain 6, subunit NuoJ"/>
    <property type="match status" value="1"/>
</dbReference>
<dbReference type="InterPro" id="IPR050290">
    <property type="entry name" value="NAD(P)H-Q_Oxidoreduct_6"/>
</dbReference>
<dbReference type="InterPro" id="IPR001457">
    <property type="entry name" value="NADH_UbQ/plastoQ_OxRdtase_su6"/>
</dbReference>
<dbReference type="InterPro" id="IPR042106">
    <property type="entry name" value="Nuo/plastoQ_OxRdtase_6_NuoJ"/>
</dbReference>
<dbReference type="PANTHER" id="PTHR48479">
    <property type="entry name" value="NAD(P)H-QUINONE OXIDOREDUCTASE SUBUNIT 6, CHLOROPLASTIC"/>
    <property type="match status" value="1"/>
</dbReference>
<dbReference type="PANTHER" id="PTHR48479:SF1">
    <property type="entry name" value="NAD(P)H-QUINONE OXIDOREDUCTASE SUBUNIT 6, CHLOROPLASTIC"/>
    <property type="match status" value="1"/>
</dbReference>
<dbReference type="Pfam" id="PF00499">
    <property type="entry name" value="Oxidored_q3"/>
    <property type="match status" value="1"/>
</dbReference>
<evidence type="ECO:0000250" key="1"/>
<evidence type="ECO:0000255" key="2"/>
<evidence type="ECO:0000305" key="3"/>
<gene>
    <name type="primary">ndhG</name>
    <name type="ORF">PA172</name>
</gene>
<name>NU6C_ORYSA</name>
<geneLocation type="chloroplast"/>
<organism>
    <name type="scientific">Oryza sativa</name>
    <name type="common">Rice</name>
    <dbReference type="NCBI Taxonomy" id="4530"/>
    <lineage>
        <taxon>Eukaryota</taxon>
        <taxon>Viridiplantae</taxon>
        <taxon>Streptophyta</taxon>
        <taxon>Embryophyta</taxon>
        <taxon>Tracheophyta</taxon>
        <taxon>Spermatophyta</taxon>
        <taxon>Magnoliopsida</taxon>
        <taxon>Liliopsida</taxon>
        <taxon>Poales</taxon>
        <taxon>Poaceae</taxon>
        <taxon>BOP clade</taxon>
        <taxon>Oryzoideae</taxon>
        <taxon>Oryzeae</taxon>
        <taxon>Oryzinae</taxon>
        <taxon>Oryza</taxon>
    </lineage>
</organism>
<comment type="function">
    <text evidence="1">NDH shuttles electrons from NAD(P)H:plastoquinone, via FMN and iron-sulfur (Fe-S) centers, to quinones in the photosynthetic chain and possibly in a chloroplast respiratory chain. The immediate electron acceptor for the enzyme in this species is believed to be plastoquinone. Couples the redox reaction to proton translocation, and thus conserves the redox energy in a proton gradient (By similarity).</text>
</comment>
<comment type="catalytic activity">
    <reaction>
        <text>a plastoquinone + NADH + (n+1) H(+)(in) = a plastoquinol + NAD(+) + n H(+)(out)</text>
        <dbReference type="Rhea" id="RHEA:42608"/>
        <dbReference type="Rhea" id="RHEA-COMP:9561"/>
        <dbReference type="Rhea" id="RHEA-COMP:9562"/>
        <dbReference type="ChEBI" id="CHEBI:15378"/>
        <dbReference type="ChEBI" id="CHEBI:17757"/>
        <dbReference type="ChEBI" id="CHEBI:57540"/>
        <dbReference type="ChEBI" id="CHEBI:57945"/>
        <dbReference type="ChEBI" id="CHEBI:62192"/>
    </reaction>
</comment>
<comment type="catalytic activity">
    <reaction>
        <text>a plastoquinone + NADPH + (n+1) H(+)(in) = a plastoquinol + NADP(+) + n H(+)(out)</text>
        <dbReference type="Rhea" id="RHEA:42612"/>
        <dbReference type="Rhea" id="RHEA-COMP:9561"/>
        <dbReference type="Rhea" id="RHEA-COMP:9562"/>
        <dbReference type="ChEBI" id="CHEBI:15378"/>
        <dbReference type="ChEBI" id="CHEBI:17757"/>
        <dbReference type="ChEBI" id="CHEBI:57783"/>
        <dbReference type="ChEBI" id="CHEBI:58349"/>
        <dbReference type="ChEBI" id="CHEBI:62192"/>
    </reaction>
</comment>
<comment type="subunit">
    <text evidence="1">NDH is composed of at least 16 different subunits, 5 of which are encoded in the nucleus.</text>
</comment>
<comment type="subcellular location">
    <subcellularLocation>
        <location evidence="1">Plastid</location>
        <location evidence="1">Chloroplast thylakoid membrane</location>
        <topology evidence="1">Multi-pass membrane protein</topology>
    </subcellularLocation>
</comment>
<comment type="similarity">
    <text evidence="3">Belongs to the complex I subunit 6 family.</text>
</comment>
<feature type="chain" id="PRO_0000118361" description="NAD(P)H-quinone oxidoreductase subunit 6, chloroplastic">
    <location>
        <begin position="1"/>
        <end position="176"/>
    </location>
</feature>
<feature type="transmembrane region" description="Helical" evidence="2">
    <location>
        <begin position="10"/>
        <end position="30"/>
    </location>
</feature>
<feature type="transmembrane region" description="Helical" evidence="2">
    <location>
        <begin position="33"/>
        <end position="53"/>
    </location>
</feature>
<feature type="transmembrane region" description="Helical" evidence="2">
    <location>
        <begin position="60"/>
        <end position="80"/>
    </location>
</feature>
<feature type="transmembrane region" description="Helical" evidence="2">
    <location>
        <begin position="92"/>
        <end position="112"/>
    </location>
</feature>
<feature type="transmembrane region" description="Helical" evidence="2">
    <location>
        <begin position="152"/>
        <end position="172"/>
    </location>
</feature>
<reference key="1">
    <citation type="journal article" date="2004" name="Plant Physiol.">
        <title>A comparison of rice chloroplast genomes.</title>
        <authorList>
            <person name="Tang J."/>
            <person name="Xia H."/>
            <person name="Cao M."/>
            <person name="Zhang X."/>
            <person name="Zeng W."/>
            <person name="Hu S."/>
            <person name="Tong W."/>
            <person name="Wang J."/>
            <person name="Wang J."/>
            <person name="Yu J."/>
            <person name="Yang H."/>
            <person name="Zhu L."/>
        </authorList>
    </citation>
    <scope>NUCLEOTIDE SEQUENCE [LARGE SCALE GENOMIC DNA]</scope>
    <source>
        <strain>cv. PA64s</strain>
    </source>
</reference>
<proteinExistence type="inferred from homology"/>
<accession>P0C329</accession>
<accession>P12130</accession>
<accession>Q6QY34</accession>
<accession>Q6Z1V8</accession>
<keyword id="KW-0150">Chloroplast</keyword>
<keyword id="KW-0472">Membrane</keyword>
<keyword id="KW-0520">NAD</keyword>
<keyword id="KW-0521">NADP</keyword>
<keyword id="KW-0934">Plastid</keyword>
<keyword id="KW-0618">Plastoquinone</keyword>
<keyword id="KW-0874">Quinone</keyword>
<keyword id="KW-0793">Thylakoid</keyword>
<keyword id="KW-1278">Translocase</keyword>
<keyword id="KW-0812">Transmembrane</keyword>
<keyword id="KW-1133">Transmembrane helix</keyword>
<keyword id="KW-0813">Transport</keyword>